<organism>
    <name type="scientific">Xanthomonas oryzae pv. oryzae (strain MAFF 311018)</name>
    <dbReference type="NCBI Taxonomy" id="342109"/>
    <lineage>
        <taxon>Bacteria</taxon>
        <taxon>Pseudomonadati</taxon>
        <taxon>Pseudomonadota</taxon>
        <taxon>Gammaproteobacteria</taxon>
        <taxon>Lysobacterales</taxon>
        <taxon>Lysobacteraceae</taxon>
        <taxon>Xanthomonas</taxon>
    </lineage>
</organism>
<sequence length="399" mass="43044">MTEFIPLGTLYHALPSPFQMKRGGVLHQAHVAYETWGALAADRSNAVLIVTGLSPNAHAAANQANPEPGWWEAMVGPGKPIDTARWFVVCVNSLGSCKGSTGPASVNPATGALYRLTFPDLSIEDVADAAADVVRALGIAQLACLIGNSMGGMTALALLLRHPGIARSHINISGSAQALPFSIAIRSLQREAIRLDPHWNGGHYDDTRYPESGMRMARKLGVITYRSALEWDGRFGRVRLDSEQSEDDPFGLEFQVESYLEGHARRFVRFFDPNCYLYLSRSMDWFDLAEYVDDKPAADMGIDSPGADALPAAKSETGVSTASTVLAGLARIRIARALAIGANTDILFPVQQQEQIADGLRAGDADARFIGLDSPQGHDAFLVDFARFGPAVRDFLQGC</sequence>
<keyword id="KW-0012">Acyltransferase</keyword>
<keyword id="KW-0028">Amino-acid biosynthesis</keyword>
<keyword id="KW-0198">Cysteine biosynthesis</keyword>
<keyword id="KW-0963">Cytoplasm</keyword>
<keyword id="KW-0808">Transferase</keyword>
<evidence type="ECO:0000255" key="1">
    <source>
        <dbReference type="HAMAP-Rule" id="MF_00296"/>
    </source>
</evidence>
<feature type="chain" id="PRO_0000231892" description="Serine O-succinyltransferase">
    <location>
        <begin position="1"/>
        <end position="399"/>
    </location>
</feature>
<feature type="domain" description="AB hydrolase-1" evidence="1">
    <location>
        <begin position="45"/>
        <end position="384"/>
    </location>
</feature>
<feature type="region of interest" description="Important for substrate specificity" evidence="1">
    <location>
        <begin position="52"/>
        <end position="55"/>
    </location>
</feature>
<feature type="active site" description="Nucleophile" evidence="1">
    <location>
        <position position="149"/>
    </location>
</feature>
<feature type="active site" evidence="1">
    <location>
        <position position="345"/>
    </location>
</feature>
<feature type="active site" evidence="1">
    <location>
        <position position="378"/>
    </location>
</feature>
<feature type="binding site" evidence="1">
    <location>
        <position position="218"/>
    </location>
    <ligand>
        <name>substrate</name>
    </ligand>
</feature>
<feature type="binding site" evidence="1">
    <location>
        <position position="379"/>
    </location>
    <ligand>
        <name>substrate</name>
    </ligand>
</feature>
<feature type="site" description="Important for acyl-CoA specificity" evidence="1">
    <location>
        <position position="186"/>
    </location>
</feature>
<gene>
    <name type="primary">metX</name>
    <name type="ordered locus">XOO1980</name>
</gene>
<reference key="1">
    <citation type="journal article" date="2005" name="Jpn. Agric. Res. Q.">
        <title>Genome sequence of Xanthomonas oryzae pv. oryzae suggests contribution of large numbers of effector genes and insertion sequences to its race diversity.</title>
        <authorList>
            <person name="Ochiai H."/>
            <person name="Inoue Y."/>
            <person name="Takeya M."/>
            <person name="Sasaki A."/>
            <person name="Kaku H."/>
        </authorList>
    </citation>
    <scope>NUCLEOTIDE SEQUENCE [LARGE SCALE GENOMIC DNA]</scope>
    <source>
        <strain>MAFF 311018</strain>
    </source>
</reference>
<accession>Q2P3Z2</accession>
<proteinExistence type="inferred from homology"/>
<comment type="function">
    <text evidence="1">Transfers a succinyl group from succinyl-CoA to L-serine, forming succinyl-L-serine.</text>
</comment>
<comment type="catalytic activity">
    <reaction evidence="1">
        <text>succinyl-CoA + L-serine = O-succinyl-L-serine + CoA</text>
        <dbReference type="Rhea" id="RHEA:52820"/>
        <dbReference type="ChEBI" id="CHEBI:33384"/>
        <dbReference type="ChEBI" id="CHEBI:57287"/>
        <dbReference type="ChEBI" id="CHEBI:57292"/>
        <dbReference type="ChEBI" id="CHEBI:136856"/>
    </reaction>
</comment>
<comment type="pathway">
    <text evidence="1">Amino-acid biosynthesis; L-cysteine biosynthesis; L-cysteine from L-serine: step 1/2.</text>
</comment>
<comment type="subunit">
    <text evidence="1">Homodimer.</text>
</comment>
<comment type="subcellular location">
    <subcellularLocation>
        <location evidence="1">Cytoplasm</location>
    </subcellularLocation>
</comment>
<comment type="similarity">
    <text evidence="1">Belongs to the AB hydrolase superfamily. MetX family.</text>
</comment>
<protein>
    <recommendedName>
        <fullName evidence="1">Serine O-succinyltransferase</fullName>
        <shortName evidence="1">SST</shortName>
        <ecNumber evidence="1">2.3.1.-</ecNumber>
    </recommendedName>
</protein>
<name>SST_XANOM</name>
<dbReference type="EC" id="2.3.1.-" evidence="1"/>
<dbReference type="EMBL" id="AP008229">
    <property type="protein sequence ID" value="BAE68735.1"/>
    <property type="molecule type" value="Genomic_DNA"/>
</dbReference>
<dbReference type="RefSeq" id="WP_011258800.1">
    <property type="nucleotide sequence ID" value="NC_007705.1"/>
</dbReference>
<dbReference type="SMR" id="Q2P3Z2"/>
<dbReference type="ESTHER" id="xanor-metx">
    <property type="family name" value="Homoserine_transacetylase"/>
</dbReference>
<dbReference type="KEGG" id="xom:XOO1980"/>
<dbReference type="HOGENOM" id="CLU_028760_1_2_6"/>
<dbReference type="UniPathway" id="UPA00136">
    <property type="reaction ID" value="UER00199"/>
</dbReference>
<dbReference type="GO" id="GO:0005737">
    <property type="term" value="C:cytoplasm"/>
    <property type="evidence" value="ECO:0007669"/>
    <property type="project" value="UniProtKB-SubCell"/>
</dbReference>
<dbReference type="GO" id="GO:0004414">
    <property type="term" value="F:homoserine O-acetyltransferase activity"/>
    <property type="evidence" value="ECO:0007669"/>
    <property type="project" value="TreeGrafter"/>
</dbReference>
<dbReference type="GO" id="GO:0160210">
    <property type="term" value="F:L-serine O-succinyltransferase activity"/>
    <property type="evidence" value="ECO:0007669"/>
    <property type="project" value="RHEA"/>
</dbReference>
<dbReference type="GO" id="GO:0006535">
    <property type="term" value="P:cysteine biosynthetic process from serine"/>
    <property type="evidence" value="ECO:0007669"/>
    <property type="project" value="UniProtKB-UniRule"/>
</dbReference>
<dbReference type="GO" id="GO:0009092">
    <property type="term" value="P:homoserine metabolic process"/>
    <property type="evidence" value="ECO:0007669"/>
    <property type="project" value="TreeGrafter"/>
</dbReference>
<dbReference type="GO" id="GO:0009086">
    <property type="term" value="P:methionine biosynthetic process"/>
    <property type="evidence" value="ECO:0007669"/>
    <property type="project" value="TreeGrafter"/>
</dbReference>
<dbReference type="Gene3D" id="3.40.50.1820">
    <property type="entry name" value="alpha/beta hydrolase"/>
    <property type="match status" value="1"/>
</dbReference>
<dbReference type="HAMAP" id="MF_00296">
    <property type="entry name" value="MetX_acyltransf"/>
    <property type="match status" value="1"/>
</dbReference>
<dbReference type="InterPro" id="IPR000073">
    <property type="entry name" value="AB_hydrolase_1"/>
</dbReference>
<dbReference type="InterPro" id="IPR029058">
    <property type="entry name" value="AB_hydrolase_fold"/>
</dbReference>
<dbReference type="InterPro" id="IPR008220">
    <property type="entry name" value="HAT_MetX-like"/>
</dbReference>
<dbReference type="NCBIfam" id="TIGR01392">
    <property type="entry name" value="homoserO_Ac_trn"/>
    <property type="match status" value="1"/>
</dbReference>
<dbReference type="NCBIfam" id="NF001209">
    <property type="entry name" value="PRK00175.1"/>
    <property type="match status" value="1"/>
</dbReference>
<dbReference type="PANTHER" id="PTHR32268">
    <property type="entry name" value="HOMOSERINE O-ACETYLTRANSFERASE"/>
    <property type="match status" value="1"/>
</dbReference>
<dbReference type="PANTHER" id="PTHR32268:SF11">
    <property type="entry name" value="HOMOSERINE O-ACETYLTRANSFERASE"/>
    <property type="match status" value="1"/>
</dbReference>
<dbReference type="Pfam" id="PF00561">
    <property type="entry name" value="Abhydrolase_1"/>
    <property type="match status" value="1"/>
</dbReference>
<dbReference type="PIRSF" id="PIRSF000443">
    <property type="entry name" value="Homoser_Ac_trans"/>
    <property type="match status" value="1"/>
</dbReference>
<dbReference type="SUPFAM" id="SSF53474">
    <property type="entry name" value="alpha/beta-Hydrolases"/>
    <property type="match status" value="1"/>
</dbReference>